<proteinExistence type="inferred from homology"/>
<feature type="chain" id="PRO_1000089203" description="Endoribonuclease YbeY">
    <location>
        <begin position="1"/>
        <end position="157"/>
    </location>
</feature>
<feature type="binding site" evidence="1">
    <location>
        <position position="114"/>
    </location>
    <ligand>
        <name>Zn(2+)</name>
        <dbReference type="ChEBI" id="CHEBI:29105"/>
        <note>catalytic</note>
    </ligand>
</feature>
<feature type="binding site" evidence="1">
    <location>
        <position position="118"/>
    </location>
    <ligand>
        <name>Zn(2+)</name>
        <dbReference type="ChEBI" id="CHEBI:29105"/>
        <note>catalytic</note>
    </ligand>
</feature>
<feature type="binding site" evidence="1">
    <location>
        <position position="124"/>
    </location>
    <ligand>
        <name>Zn(2+)</name>
        <dbReference type="ChEBI" id="CHEBI:29105"/>
        <note>catalytic</note>
    </ligand>
</feature>
<sequence>MSQVILDLQLACENHAGLPDEAQFQRWLDGVIPQFQEEAEVTIRLVDETESHDLNLTYRGKDKPTNVLSFPFEAPPGIEMPLLGDLIICRQVVEQEAQEQSKPLEAHWAHMVVHGSLHLLGYDHIDDDEAEEMESLETEIMLAMGYEDPYIAEKIAE</sequence>
<accession>B5QWB9</accession>
<name>YBEY_SALEP</name>
<protein>
    <recommendedName>
        <fullName evidence="1">Endoribonuclease YbeY</fullName>
        <ecNumber evidence="1">3.1.-.-</ecNumber>
    </recommendedName>
</protein>
<dbReference type="EC" id="3.1.-.-" evidence="1"/>
<dbReference type="EMBL" id="AM933172">
    <property type="protein sequence ID" value="CAR32225.1"/>
    <property type="molecule type" value="Genomic_DNA"/>
</dbReference>
<dbReference type="RefSeq" id="WP_000084480.1">
    <property type="nucleotide sequence ID" value="NC_011294.1"/>
</dbReference>
<dbReference type="SMR" id="B5QWB9"/>
<dbReference type="KEGG" id="set:SEN0637"/>
<dbReference type="HOGENOM" id="CLU_106710_0_1_6"/>
<dbReference type="Proteomes" id="UP000000613">
    <property type="component" value="Chromosome"/>
</dbReference>
<dbReference type="GO" id="GO:0005737">
    <property type="term" value="C:cytoplasm"/>
    <property type="evidence" value="ECO:0007669"/>
    <property type="project" value="UniProtKB-SubCell"/>
</dbReference>
<dbReference type="GO" id="GO:0004222">
    <property type="term" value="F:metalloendopeptidase activity"/>
    <property type="evidence" value="ECO:0007669"/>
    <property type="project" value="InterPro"/>
</dbReference>
<dbReference type="GO" id="GO:0004521">
    <property type="term" value="F:RNA endonuclease activity"/>
    <property type="evidence" value="ECO:0007669"/>
    <property type="project" value="UniProtKB-UniRule"/>
</dbReference>
<dbReference type="GO" id="GO:0008270">
    <property type="term" value="F:zinc ion binding"/>
    <property type="evidence" value="ECO:0007669"/>
    <property type="project" value="UniProtKB-UniRule"/>
</dbReference>
<dbReference type="GO" id="GO:0006364">
    <property type="term" value="P:rRNA processing"/>
    <property type="evidence" value="ECO:0007669"/>
    <property type="project" value="UniProtKB-UniRule"/>
</dbReference>
<dbReference type="Gene3D" id="3.40.390.30">
    <property type="entry name" value="Metalloproteases ('zincins'), catalytic domain"/>
    <property type="match status" value="1"/>
</dbReference>
<dbReference type="HAMAP" id="MF_00009">
    <property type="entry name" value="Endoribonucl_YbeY"/>
    <property type="match status" value="1"/>
</dbReference>
<dbReference type="InterPro" id="IPR023091">
    <property type="entry name" value="MetalPrtase_cat_dom_sf_prd"/>
</dbReference>
<dbReference type="InterPro" id="IPR002036">
    <property type="entry name" value="YbeY"/>
</dbReference>
<dbReference type="InterPro" id="IPR020549">
    <property type="entry name" value="YbeY_CS"/>
</dbReference>
<dbReference type="NCBIfam" id="TIGR00043">
    <property type="entry name" value="rRNA maturation RNase YbeY"/>
    <property type="match status" value="1"/>
</dbReference>
<dbReference type="PANTHER" id="PTHR46986">
    <property type="entry name" value="ENDORIBONUCLEASE YBEY, CHLOROPLASTIC"/>
    <property type="match status" value="1"/>
</dbReference>
<dbReference type="PANTHER" id="PTHR46986:SF1">
    <property type="entry name" value="ENDORIBONUCLEASE YBEY, CHLOROPLASTIC"/>
    <property type="match status" value="1"/>
</dbReference>
<dbReference type="Pfam" id="PF02130">
    <property type="entry name" value="YbeY"/>
    <property type="match status" value="1"/>
</dbReference>
<dbReference type="SUPFAM" id="SSF55486">
    <property type="entry name" value="Metalloproteases ('zincins'), catalytic domain"/>
    <property type="match status" value="1"/>
</dbReference>
<dbReference type="PROSITE" id="PS01306">
    <property type="entry name" value="UPF0054"/>
    <property type="match status" value="1"/>
</dbReference>
<reference key="1">
    <citation type="journal article" date="2008" name="Genome Res.">
        <title>Comparative genome analysis of Salmonella enteritidis PT4 and Salmonella gallinarum 287/91 provides insights into evolutionary and host adaptation pathways.</title>
        <authorList>
            <person name="Thomson N.R."/>
            <person name="Clayton D.J."/>
            <person name="Windhorst D."/>
            <person name="Vernikos G."/>
            <person name="Davidson S."/>
            <person name="Churcher C."/>
            <person name="Quail M.A."/>
            <person name="Stevens M."/>
            <person name="Jones M.A."/>
            <person name="Watson M."/>
            <person name="Barron A."/>
            <person name="Layton A."/>
            <person name="Pickard D."/>
            <person name="Kingsley R.A."/>
            <person name="Bignell A."/>
            <person name="Clark L."/>
            <person name="Harris B."/>
            <person name="Ormond D."/>
            <person name="Abdellah Z."/>
            <person name="Brooks K."/>
            <person name="Cherevach I."/>
            <person name="Chillingworth T."/>
            <person name="Woodward J."/>
            <person name="Norberczak H."/>
            <person name="Lord A."/>
            <person name="Arrowsmith C."/>
            <person name="Jagels K."/>
            <person name="Moule S."/>
            <person name="Mungall K."/>
            <person name="Saunders M."/>
            <person name="Whitehead S."/>
            <person name="Chabalgoity J.A."/>
            <person name="Maskell D."/>
            <person name="Humphreys T."/>
            <person name="Roberts M."/>
            <person name="Barrow P.A."/>
            <person name="Dougan G."/>
            <person name="Parkhill J."/>
        </authorList>
    </citation>
    <scope>NUCLEOTIDE SEQUENCE [LARGE SCALE GENOMIC DNA]</scope>
    <source>
        <strain>P125109</strain>
    </source>
</reference>
<organism>
    <name type="scientific">Salmonella enteritidis PT4 (strain P125109)</name>
    <dbReference type="NCBI Taxonomy" id="550537"/>
    <lineage>
        <taxon>Bacteria</taxon>
        <taxon>Pseudomonadati</taxon>
        <taxon>Pseudomonadota</taxon>
        <taxon>Gammaproteobacteria</taxon>
        <taxon>Enterobacterales</taxon>
        <taxon>Enterobacteriaceae</taxon>
        <taxon>Salmonella</taxon>
    </lineage>
</organism>
<evidence type="ECO:0000255" key="1">
    <source>
        <dbReference type="HAMAP-Rule" id="MF_00009"/>
    </source>
</evidence>
<keyword id="KW-0963">Cytoplasm</keyword>
<keyword id="KW-0255">Endonuclease</keyword>
<keyword id="KW-0378">Hydrolase</keyword>
<keyword id="KW-0479">Metal-binding</keyword>
<keyword id="KW-0540">Nuclease</keyword>
<keyword id="KW-0690">Ribosome biogenesis</keyword>
<keyword id="KW-0698">rRNA processing</keyword>
<keyword id="KW-0862">Zinc</keyword>
<comment type="function">
    <text evidence="1">Single strand-specific metallo-endoribonuclease involved in late-stage 70S ribosome quality control and in maturation of the 3' terminus of the 16S rRNA.</text>
</comment>
<comment type="cofactor">
    <cofactor evidence="1">
        <name>Zn(2+)</name>
        <dbReference type="ChEBI" id="CHEBI:29105"/>
    </cofactor>
    <text evidence="1">Binds 1 zinc ion.</text>
</comment>
<comment type="subcellular location">
    <subcellularLocation>
        <location evidence="1">Cytoplasm</location>
    </subcellularLocation>
</comment>
<comment type="similarity">
    <text evidence="1">Belongs to the endoribonuclease YbeY family.</text>
</comment>
<gene>
    <name evidence="1" type="primary">ybeY</name>
    <name type="ordered locus">SEN0637</name>
</gene>